<reference key="1">
    <citation type="journal article" date="2010" name="J. Bacteriol.">
        <title>Genome sequence of the deep-rooted Yersinia pestis strain Angola reveals new insights into the evolution and pangenome of the plague bacterium.</title>
        <authorList>
            <person name="Eppinger M."/>
            <person name="Worsham P.L."/>
            <person name="Nikolich M.P."/>
            <person name="Riley D.R."/>
            <person name="Sebastian Y."/>
            <person name="Mou S."/>
            <person name="Achtman M."/>
            <person name="Lindler L.E."/>
            <person name="Ravel J."/>
        </authorList>
    </citation>
    <scope>NUCLEOTIDE SEQUENCE [LARGE SCALE GENOMIC DNA]</scope>
    <source>
        <strain>Angola</strain>
    </source>
</reference>
<proteinExistence type="inferred from homology"/>
<sequence>MINKTLLGLSLGALMFTAGSAVAADYKIDKEGQHAFIEFRIKHLGYSWLYGSFNDFDGSFTFDDKNPAADKVNVVINTNSVDTNHAERDKHLRGKSFLNVAKFPQATFESTEVKKNGDGYSVIGNLTLNGVTKPVTLESKLTGQGNDPWGGYRAGFEANGNIKLKDFNITTDLGPASQEVELILSVEGVQVK</sequence>
<dbReference type="EMBL" id="CP000901">
    <property type="protein sequence ID" value="ABX85676.1"/>
    <property type="molecule type" value="Genomic_DNA"/>
</dbReference>
<dbReference type="RefSeq" id="WP_002211011.1">
    <property type="nucleotide sequence ID" value="NZ_CP009935.1"/>
</dbReference>
<dbReference type="SMR" id="A9R8S1"/>
<dbReference type="KEGG" id="ypg:YpAngola_A2224"/>
<dbReference type="PATRIC" id="fig|349746.12.peg.3227"/>
<dbReference type="GO" id="GO:0042597">
    <property type="term" value="C:periplasmic space"/>
    <property type="evidence" value="ECO:0007669"/>
    <property type="project" value="UniProtKB-SubCell"/>
</dbReference>
<dbReference type="Gene3D" id="2.40.128.110">
    <property type="entry name" value="Lipid/polyisoprenoid-binding, YceI-like"/>
    <property type="match status" value="1"/>
</dbReference>
<dbReference type="HAMAP" id="MF_00780">
    <property type="entry name" value="UPF0312"/>
    <property type="match status" value="1"/>
</dbReference>
<dbReference type="InterPro" id="IPR007372">
    <property type="entry name" value="Lipid/polyisoprenoid-bd_YceI"/>
</dbReference>
<dbReference type="InterPro" id="IPR036761">
    <property type="entry name" value="TTHA0802/YceI-like_sf"/>
</dbReference>
<dbReference type="InterPro" id="IPR023480">
    <property type="entry name" value="UPF0312/YceI"/>
</dbReference>
<dbReference type="NCBIfam" id="NF002994">
    <property type="entry name" value="PRK03757.1"/>
    <property type="match status" value="1"/>
</dbReference>
<dbReference type="PANTHER" id="PTHR34406">
    <property type="entry name" value="PROTEIN YCEI"/>
    <property type="match status" value="1"/>
</dbReference>
<dbReference type="PANTHER" id="PTHR34406:SF1">
    <property type="entry name" value="PROTEIN YCEI"/>
    <property type="match status" value="1"/>
</dbReference>
<dbReference type="Pfam" id="PF04264">
    <property type="entry name" value="YceI"/>
    <property type="match status" value="1"/>
</dbReference>
<dbReference type="SMART" id="SM00867">
    <property type="entry name" value="YceI"/>
    <property type="match status" value="1"/>
</dbReference>
<dbReference type="SUPFAM" id="SSF101874">
    <property type="entry name" value="YceI-like"/>
    <property type="match status" value="1"/>
</dbReference>
<accession>A9R8S1</accession>
<protein>
    <recommendedName>
        <fullName evidence="1">UPF0312 protein YpAngola_A2224</fullName>
    </recommendedName>
</protein>
<gene>
    <name type="ordered locus">YpAngola_A2224</name>
</gene>
<feature type="signal peptide" evidence="1">
    <location>
        <begin position="1"/>
        <end position="23"/>
    </location>
</feature>
<feature type="chain" id="PRO_1000200482" description="UPF0312 protein YpAngola_A2224">
    <location>
        <begin position="24"/>
        <end position="192"/>
    </location>
</feature>
<keyword id="KW-0574">Periplasm</keyword>
<keyword id="KW-0732">Signal</keyword>
<evidence type="ECO:0000255" key="1">
    <source>
        <dbReference type="HAMAP-Rule" id="MF_00780"/>
    </source>
</evidence>
<comment type="subcellular location">
    <subcellularLocation>
        <location evidence="1">Periplasm</location>
    </subcellularLocation>
</comment>
<comment type="similarity">
    <text evidence="1">Belongs to the UPF0312 family. Type 1 subfamily.</text>
</comment>
<organism>
    <name type="scientific">Yersinia pestis bv. Antiqua (strain Angola)</name>
    <dbReference type="NCBI Taxonomy" id="349746"/>
    <lineage>
        <taxon>Bacteria</taxon>
        <taxon>Pseudomonadati</taxon>
        <taxon>Pseudomonadota</taxon>
        <taxon>Gammaproteobacteria</taxon>
        <taxon>Enterobacterales</taxon>
        <taxon>Yersiniaceae</taxon>
        <taxon>Yersinia</taxon>
    </lineage>
</organism>
<name>Y2224_YERPG</name>